<feature type="chain" id="PRO_0000229623" description="NAD kinase">
    <location>
        <begin position="1"/>
        <end position="286"/>
    </location>
</feature>
<feature type="active site" description="Proton acceptor" evidence="1">
    <location>
        <position position="66"/>
    </location>
</feature>
<feature type="binding site" evidence="1">
    <location>
        <begin position="66"/>
        <end position="67"/>
    </location>
    <ligand>
        <name>NAD(+)</name>
        <dbReference type="ChEBI" id="CHEBI:57540"/>
    </ligand>
</feature>
<feature type="binding site" evidence="1">
    <location>
        <begin position="137"/>
        <end position="138"/>
    </location>
    <ligand>
        <name>NAD(+)</name>
        <dbReference type="ChEBI" id="CHEBI:57540"/>
    </ligand>
</feature>
<feature type="binding site" evidence="1">
    <location>
        <position position="148"/>
    </location>
    <ligand>
        <name>NAD(+)</name>
        <dbReference type="ChEBI" id="CHEBI:57540"/>
    </ligand>
</feature>
<feature type="binding site" evidence="1">
    <location>
        <position position="165"/>
    </location>
    <ligand>
        <name>NAD(+)</name>
        <dbReference type="ChEBI" id="CHEBI:57540"/>
    </ligand>
</feature>
<feature type="binding site" evidence="1">
    <location>
        <position position="167"/>
    </location>
    <ligand>
        <name>NAD(+)</name>
        <dbReference type="ChEBI" id="CHEBI:57540"/>
    </ligand>
</feature>
<feature type="binding site" evidence="1">
    <location>
        <begin position="178"/>
        <end position="183"/>
    </location>
    <ligand>
        <name>NAD(+)</name>
        <dbReference type="ChEBI" id="CHEBI:57540"/>
    </ligand>
</feature>
<name>NADK_CHLCH</name>
<gene>
    <name evidence="1" type="primary">nadK</name>
    <name type="ordered locus">Cag_0019</name>
</gene>
<reference key="1">
    <citation type="submission" date="2005-08" db="EMBL/GenBank/DDBJ databases">
        <title>Complete sequence of Chlorobium chlorochromatii CaD3.</title>
        <authorList>
            <consortium name="US DOE Joint Genome Institute"/>
            <person name="Copeland A."/>
            <person name="Lucas S."/>
            <person name="Lapidus A."/>
            <person name="Barry K."/>
            <person name="Detter J.C."/>
            <person name="Glavina T."/>
            <person name="Hammon N."/>
            <person name="Israni S."/>
            <person name="Pitluck S."/>
            <person name="Bryant D."/>
            <person name="Schmutz J."/>
            <person name="Larimer F."/>
            <person name="Land M."/>
            <person name="Kyrpides N."/>
            <person name="Ivanova N."/>
            <person name="Richardson P."/>
        </authorList>
    </citation>
    <scope>NUCLEOTIDE SEQUENCE [LARGE SCALE GENOMIC DNA]</scope>
    <source>
        <strain>CaD3</strain>
    </source>
</reference>
<evidence type="ECO:0000255" key="1">
    <source>
        <dbReference type="HAMAP-Rule" id="MF_00361"/>
    </source>
</evidence>
<organism>
    <name type="scientific">Chlorobium chlorochromatii (strain CaD3)</name>
    <dbReference type="NCBI Taxonomy" id="340177"/>
    <lineage>
        <taxon>Bacteria</taxon>
        <taxon>Pseudomonadati</taxon>
        <taxon>Chlorobiota</taxon>
        <taxon>Chlorobiia</taxon>
        <taxon>Chlorobiales</taxon>
        <taxon>Chlorobiaceae</taxon>
        <taxon>Chlorobium/Pelodictyon group</taxon>
        <taxon>Chlorobium</taxon>
    </lineage>
</organism>
<keyword id="KW-0067">ATP-binding</keyword>
<keyword id="KW-0963">Cytoplasm</keyword>
<keyword id="KW-0418">Kinase</keyword>
<keyword id="KW-0520">NAD</keyword>
<keyword id="KW-0521">NADP</keyword>
<keyword id="KW-0547">Nucleotide-binding</keyword>
<keyword id="KW-0808">Transferase</keyword>
<proteinExistence type="inferred from homology"/>
<sequence>MNFGIVVNISREQALHLARTLATWFDERHIGYMFETLSGSTLGLGPSAPIEELNCHCDVFISLGGDGTLLFTSHHAVTKPVIGINVGYLGFLAEFTQSEMFAAVEKVLSGNYSLHTRSQLEATAFMDGVSHQFRALNDAVLEKGTYPRIPAFIIKLDGELLSAYRADGIIIATSTGSTAYSMSAGGPIIAPKSSVFVITPICPHMLTVRPIVISDDKVIEISVDAPDGEFPLNCDGSLKKMLAPHECITIKKSPVAINLVANEKRNYGEILRTKLLWGREHDGCCS</sequence>
<accession>Q3ANS5</accession>
<dbReference type="EC" id="2.7.1.23" evidence="1"/>
<dbReference type="EMBL" id="CP000108">
    <property type="protein sequence ID" value="ABB27298.1"/>
    <property type="molecule type" value="Genomic_DNA"/>
</dbReference>
<dbReference type="SMR" id="Q3ANS5"/>
<dbReference type="STRING" id="340177.Cag_0019"/>
<dbReference type="KEGG" id="cch:Cag_0019"/>
<dbReference type="eggNOG" id="COG0061">
    <property type="taxonomic scope" value="Bacteria"/>
</dbReference>
<dbReference type="HOGENOM" id="CLU_008831_0_1_10"/>
<dbReference type="OrthoDB" id="9774737at2"/>
<dbReference type="GO" id="GO:0005737">
    <property type="term" value="C:cytoplasm"/>
    <property type="evidence" value="ECO:0007669"/>
    <property type="project" value="UniProtKB-SubCell"/>
</dbReference>
<dbReference type="GO" id="GO:0005524">
    <property type="term" value="F:ATP binding"/>
    <property type="evidence" value="ECO:0007669"/>
    <property type="project" value="UniProtKB-KW"/>
</dbReference>
<dbReference type="GO" id="GO:0046872">
    <property type="term" value="F:metal ion binding"/>
    <property type="evidence" value="ECO:0007669"/>
    <property type="project" value="UniProtKB-UniRule"/>
</dbReference>
<dbReference type="GO" id="GO:0051287">
    <property type="term" value="F:NAD binding"/>
    <property type="evidence" value="ECO:0007669"/>
    <property type="project" value="UniProtKB-ARBA"/>
</dbReference>
<dbReference type="GO" id="GO:0003951">
    <property type="term" value="F:NAD+ kinase activity"/>
    <property type="evidence" value="ECO:0007669"/>
    <property type="project" value="UniProtKB-UniRule"/>
</dbReference>
<dbReference type="GO" id="GO:0019674">
    <property type="term" value="P:NAD metabolic process"/>
    <property type="evidence" value="ECO:0007669"/>
    <property type="project" value="InterPro"/>
</dbReference>
<dbReference type="GO" id="GO:0006741">
    <property type="term" value="P:NADP biosynthetic process"/>
    <property type="evidence" value="ECO:0007669"/>
    <property type="project" value="UniProtKB-UniRule"/>
</dbReference>
<dbReference type="Gene3D" id="3.40.50.10330">
    <property type="entry name" value="Probable inorganic polyphosphate/atp-NAD kinase, domain 1"/>
    <property type="match status" value="1"/>
</dbReference>
<dbReference type="Gene3D" id="2.60.200.30">
    <property type="entry name" value="Probable inorganic polyphosphate/atp-NAD kinase, domain 2"/>
    <property type="match status" value="1"/>
</dbReference>
<dbReference type="HAMAP" id="MF_00361">
    <property type="entry name" value="NAD_kinase"/>
    <property type="match status" value="1"/>
</dbReference>
<dbReference type="InterPro" id="IPR017438">
    <property type="entry name" value="ATP-NAD_kinase_N"/>
</dbReference>
<dbReference type="InterPro" id="IPR017437">
    <property type="entry name" value="ATP-NAD_kinase_PpnK-typ_C"/>
</dbReference>
<dbReference type="InterPro" id="IPR016064">
    <property type="entry name" value="NAD/diacylglycerol_kinase_sf"/>
</dbReference>
<dbReference type="InterPro" id="IPR002504">
    <property type="entry name" value="NADK"/>
</dbReference>
<dbReference type="PANTHER" id="PTHR20275">
    <property type="entry name" value="NAD KINASE"/>
    <property type="match status" value="1"/>
</dbReference>
<dbReference type="PANTHER" id="PTHR20275:SF0">
    <property type="entry name" value="NAD KINASE"/>
    <property type="match status" value="1"/>
</dbReference>
<dbReference type="Pfam" id="PF01513">
    <property type="entry name" value="NAD_kinase"/>
    <property type="match status" value="1"/>
</dbReference>
<dbReference type="Pfam" id="PF20143">
    <property type="entry name" value="NAD_kinase_C"/>
    <property type="match status" value="1"/>
</dbReference>
<dbReference type="SUPFAM" id="SSF111331">
    <property type="entry name" value="NAD kinase/diacylglycerol kinase-like"/>
    <property type="match status" value="1"/>
</dbReference>
<protein>
    <recommendedName>
        <fullName evidence="1">NAD kinase</fullName>
        <ecNumber evidence="1">2.7.1.23</ecNumber>
    </recommendedName>
    <alternativeName>
        <fullName evidence="1">ATP-dependent NAD kinase</fullName>
    </alternativeName>
</protein>
<comment type="function">
    <text evidence="1">Involved in the regulation of the intracellular balance of NAD and NADP, and is a key enzyme in the biosynthesis of NADP. Catalyzes specifically the phosphorylation on 2'-hydroxyl of the adenosine moiety of NAD to yield NADP.</text>
</comment>
<comment type="catalytic activity">
    <reaction evidence="1">
        <text>NAD(+) + ATP = ADP + NADP(+) + H(+)</text>
        <dbReference type="Rhea" id="RHEA:18629"/>
        <dbReference type="ChEBI" id="CHEBI:15378"/>
        <dbReference type="ChEBI" id="CHEBI:30616"/>
        <dbReference type="ChEBI" id="CHEBI:57540"/>
        <dbReference type="ChEBI" id="CHEBI:58349"/>
        <dbReference type="ChEBI" id="CHEBI:456216"/>
        <dbReference type="EC" id="2.7.1.23"/>
    </reaction>
</comment>
<comment type="cofactor">
    <cofactor evidence="1">
        <name>a divalent metal cation</name>
        <dbReference type="ChEBI" id="CHEBI:60240"/>
    </cofactor>
</comment>
<comment type="subcellular location">
    <subcellularLocation>
        <location evidence="1">Cytoplasm</location>
    </subcellularLocation>
</comment>
<comment type="similarity">
    <text evidence="1">Belongs to the NAD kinase family.</text>
</comment>